<proteinExistence type="inferred from homology"/>
<gene>
    <name evidence="1" type="primary">miaB</name>
    <name type="ordered locus">Fnod_0454</name>
</gene>
<protein>
    <recommendedName>
        <fullName evidence="1">tRNA-2-methylthio-N(6)-dimethylallyladenosine synthase</fullName>
        <ecNumber evidence="1">2.8.4.3</ecNumber>
    </recommendedName>
    <alternativeName>
        <fullName evidence="1">(Dimethylallyl)adenosine tRNA methylthiotransferase MiaB</fullName>
    </alternativeName>
    <alternativeName>
        <fullName evidence="1">tRNA-i(6)A37 methylthiotransferase</fullName>
    </alternativeName>
</protein>
<feature type="chain" id="PRO_0000374298" description="tRNA-2-methylthio-N(6)-dimethylallyladenosine synthase">
    <location>
        <begin position="1"/>
        <end position="430"/>
    </location>
</feature>
<feature type="domain" description="MTTase N-terminal" evidence="1">
    <location>
        <begin position="1"/>
        <end position="110"/>
    </location>
</feature>
<feature type="domain" description="Radical SAM core" evidence="2">
    <location>
        <begin position="132"/>
        <end position="363"/>
    </location>
</feature>
<feature type="domain" description="TRAM" evidence="1">
    <location>
        <begin position="366"/>
        <end position="427"/>
    </location>
</feature>
<feature type="binding site" evidence="1">
    <location>
        <position position="10"/>
    </location>
    <ligand>
        <name>[4Fe-4S] cluster</name>
        <dbReference type="ChEBI" id="CHEBI:49883"/>
        <label>1</label>
    </ligand>
</feature>
<feature type="binding site" evidence="1">
    <location>
        <position position="46"/>
    </location>
    <ligand>
        <name>[4Fe-4S] cluster</name>
        <dbReference type="ChEBI" id="CHEBI:49883"/>
        <label>1</label>
    </ligand>
</feature>
<feature type="binding site" evidence="1">
    <location>
        <position position="75"/>
    </location>
    <ligand>
        <name>[4Fe-4S] cluster</name>
        <dbReference type="ChEBI" id="CHEBI:49883"/>
        <label>1</label>
    </ligand>
</feature>
<feature type="binding site" evidence="1">
    <location>
        <position position="146"/>
    </location>
    <ligand>
        <name>[4Fe-4S] cluster</name>
        <dbReference type="ChEBI" id="CHEBI:49883"/>
        <label>2</label>
        <note>4Fe-4S-S-AdoMet</note>
    </ligand>
</feature>
<feature type="binding site" evidence="1">
    <location>
        <position position="150"/>
    </location>
    <ligand>
        <name>[4Fe-4S] cluster</name>
        <dbReference type="ChEBI" id="CHEBI:49883"/>
        <label>2</label>
        <note>4Fe-4S-S-AdoMet</note>
    </ligand>
</feature>
<feature type="binding site" evidence="1">
    <location>
        <position position="153"/>
    </location>
    <ligand>
        <name>[4Fe-4S] cluster</name>
        <dbReference type="ChEBI" id="CHEBI:49883"/>
        <label>2</label>
        <note>4Fe-4S-S-AdoMet</note>
    </ligand>
</feature>
<comment type="function">
    <text evidence="1">Catalyzes the methylthiolation of N6-(dimethylallyl)adenosine (i(6)A), leading to the formation of 2-methylthio-N6-(dimethylallyl)adenosine (ms(2)i(6)A) at position 37 in tRNAs that read codons beginning with uridine.</text>
</comment>
<comment type="catalytic activity">
    <reaction evidence="1">
        <text>N(6)-dimethylallyladenosine(37) in tRNA + (sulfur carrier)-SH + AH2 + 2 S-adenosyl-L-methionine = 2-methylsulfanyl-N(6)-dimethylallyladenosine(37) in tRNA + (sulfur carrier)-H + 5'-deoxyadenosine + L-methionine + A + S-adenosyl-L-homocysteine + 2 H(+)</text>
        <dbReference type="Rhea" id="RHEA:37067"/>
        <dbReference type="Rhea" id="RHEA-COMP:10375"/>
        <dbReference type="Rhea" id="RHEA-COMP:10376"/>
        <dbReference type="Rhea" id="RHEA-COMP:14737"/>
        <dbReference type="Rhea" id="RHEA-COMP:14739"/>
        <dbReference type="ChEBI" id="CHEBI:13193"/>
        <dbReference type="ChEBI" id="CHEBI:15378"/>
        <dbReference type="ChEBI" id="CHEBI:17319"/>
        <dbReference type="ChEBI" id="CHEBI:17499"/>
        <dbReference type="ChEBI" id="CHEBI:29917"/>
        <dbReference type="ChEBI" id="CHEBI:57844"/>
        <dbReference type="ChEBI" id="CHEBI:57856"/>
        <dbReference type="ChEBI" id="CHEBI:59789"/>
        <dbReference type="ChEBI" id="CHEBI:64428"/>
        <dbReference type="ChEBI" id="CHEBI:74415"/>
        <dbReference type="ChEBI" id="CHEBI:74417"/>
        <dbReference type="EC" id="2.8.4.3"/>
    </reaction>
</comment>
<comment type="cofactor">
    <cofactor evidence="1">
        <name>[4Fe-4S] cluster</name>
        <dbReference type="ChEBI" id="CHEBI:49883"/>
    </cofactor>
    <text evidence="1">Binds 2 [4Fe-4S] clusters. One cluster is coordinated with 3 cysteines and an exchangeable S-adenosyl-L-methionine.</text>
</comment>
<comment type="subunit">
    <text evidence="1">Monomer.</text>
</comment>
<comment type="subcellular location">
    <subcellularLocation>
        <location evidence="1">Cytoplasm</location>
    </subcellularLocation>
</comment>
<comment type="similarity">
    <text evidence="1">Belongs to the methylthiotransferase family. MiaB subfamily.</text>
</comment>
<reference key="1">
    <citation type="submission" date="2007-07" db="EMBL/GenBank/DDBJ databases">
        <title>Complete sequence of Fervidobacterium nodosum Rt17-B1.</title>
        <authorList>
            <consortium name="US DOE Joint Genome Institute"/>
            <person name="Copeland A."/>
            <person name="Lucas S."/>
            <person name="Lapidus A."/>
            <person name="Barry K."/>
            <person name="Glavina del Rio T."/>
            <person name="Dalin E."/>
            <person name="Tice H."/>
            <person name="Pitluck S."/>
            <person name="Saunders E."/>
            <person name="Brettin T."/>
            <person name="Bruce D."/>
            <person name="Detter J.C."/>
            <person name="Han C."/>
            <person name="Schmutz J."/>
            <person name="Larimer F."/>
            <person name="Land M."/>
            <person name="Hauser L."/>
            <person name="Kyrpides N."/>
            <person name="Mikhailova N."/>
            <person name="Nelson K."/>
            <person name="Gogarten J.P."/>
            <person name="Noll K."/>
            <person name="Richardson P."/>
        </authorList>
    </citation>
    <scope>NUCLEOTIDE SEQUENCE [LARGE SCALE GENOMIC DNA]</scope>
    <source>
        <strain>ATCC 35602 / DSM 5306 / Rt17-B1</strain>
    </source>
</reference>
<organism>
    <name type="scientific">Fervidobacterium nodosum (strain ATCC 35602 / DSM 5306 / Rt17-B1)</name>
    <dbReference type="NCBI Taxonomy" id="381764"/>
    <lineage>
        <taxon>Bacteria</taxon>
        <taxon>Thermotogati</taxon>
        <taxon>Thermotogota</taxon>
        <taxon>Thermotogae</taxon>
        <taxon>Thermotogales</taxon>
        <taxon>Fervidobacteriaceae</taxon>
        <taxon>Fervidobacterium</taxon>
    </lineage>
</organism>
<keyword id="KW-0004">4Fe-4S</keyword>
<keyword id="KW-0963">Cytoplasm</keyword>
<keyword id="KW-0408">Iron</keyword>
<keyword id="KW-0411">Iron-sulfur</keyword>
<keyword id="KW-0479">Metal-binding</keyword>
<keyword id="KW-1185">Reference proteome</keyword>
<keyword id="KW-0949">S-adenosyl-L-methionine</keyword>
<keyword id="KW-0808">Transferase</keyword>
<keyword id="KW-0819">tRNA processing</keyword>
<evidence type="ECO:0000255" key="1">
    <source>
        <dbReference type="HAMAP-Rule" id="MF_01864"/>
    </source>
</evidence>
<evidence type="ECO:0000255" key="2">
    <source>
        <dbReference type="PROSITE-ProRule" id="PRU01266"/>
    </source>
</evidence>
<dbReference type="EC" id="2.8.4.3" evidence="1"/>
<dbReference type="EMBL" id="CP000771">
    <property type="protein sequence ID" value="ABS60319.1"/>
    <property type="molecule type" value="Genomic_DNA"/>
</dbReference>
<dbReference type="RefSeq" id="WP_011993639.1">
    <property type="nucleotide sequence ID" value="NC_009718.1"/>
</dbReference>
<dbReference type="SMR" id="A7HK86"/>
<dbReference type="STRING" id="381764.Fnod_0454"/>
<dbReference type="KEGG" id="fno:Fnod_0454"/>
<dbReference type="eggNOG" id="COG0621">
    <property type="taxonomic scope" value="Bacteria"/>
</dbReference>
<dbReference type="HOGENOM" id="CLU_018697_2_0_0"/>
<dbReference type="OrthoDB" id="9805215at2"/>
<dbReference type="Proteomes" id="UP000002415">
    <property type="component" value="Chromosome"/>
</dbReference>
<dbReference type="GO" id="GO:0005829">
    <property type="term" value="C:cytosol"/>
    <property type="evidence" value="ECO:0007669"/>
    <property type="project" value="TreeGrafter"/>
</dbReference>
<dbReference type="GO" id="GO:0051539">
    <property type="term" value="F:4 iron, 4 sulfur cluster binding"/>
    <property type="evidence" value="ECO:0007669"/>
    <property type="project" value="UniProtKB-UniRule"/>
</dbReference>
<dbReference type="GO" id="GO:0046872">
    <property type="term" value="F:metal ion binding"/>
    <property type="evidence" value="ECO:0007669"/>
    <property type="project" value="UniProtKB-KW"/>
</dbReference>
<dbReference type="GO" id="GO:0035597">
    <property type="term" value="F:N6-isopentenyladenosine methylthiotransferase activity"/>
    <property type="evidence" value="ECO:0007669"/>
    <property type="project" value="TreeGrafter"/>
</dbReference>
<dbReference type="CDD" id="cd01335">
    <property type="entry name" value="Radical_SAM"/>
    <property type="match status" value="1"/>
</dbReference>
<dbReference type="FunFam" id="3.40.50.12160:FF:000003">
    <property type="entry name" value="CDK5 regulatory subunit-associated protein 1"/>
    <property type="match status" value="1"/>
</dbReference>
<dbReference type="FunFam" id="3.80.30.20:FF:000001">
    <property type="entry name" value="tRNA-2-methylthio-N(6)-dimethylallyladenosine synthase 2"/>
    <property type="match status" value="1"/>
</dbReference>
<dbReference type="Gene3D" id="3.40.50.12160">
    <property type="entry name" value="Methylthiotransferase, N-terminal domain"/>
    <property type="match status" value="1"/>
</dbReference>
<dbReference type="Gene3D" id="3.80.30.20">
    <property type="entry name" value="tm_1862 like domain"/>
    <property type="match status" value="1"/>
</dbReference>
<dbReference type="HAMAP" id="MF_01864">
    <property type="entry name" value="tRNA_metthiotr_MiaB"/>
    <property type="match status" value="1"/>
</dbReference>
<dbReference type="InterPro" id="IPR006638">
    <property type="entry name" value="Elp3/MiaA/NifB-like_rSAM"/>
</dbReference>
<dbReference type="InterPro" id="IPR005839">
    <property type="entry name" value="Methylthiotransferase"/>
</dbReference>
<dbReference type="InterPro" id="IPR020612">
    <property type="entry name" value="Methylthiotransferase_CS"/>
</dbReference>
<dbReference type="InterPro" id="IPR013848">
    <property type="entry name" value="Methylthiotransferase_N"/>
</dbReference>
<dbReference type="InterPro" id="IPR038135">
    <property type="entry name" value="Methylthiotransferase_N_sf"/>
</dbReference>
<dbReference type="InterPro" id="IPR006463">
    <property type="entry name" value="MiaB_methiolase"/>
</dbReference>
<dbReference type="InterPro" id="IPR007197">
    <property type="entry name" value="rSAM"/>
</dbReference>
<dbReference type="InterPro" id="IPR023404">
    <property type="entry name" value="rSAM_horseshoe"/>
</dbReference>
<dbReference type="InterPro" id="IPR002792">
    <property type="entry name" value="TRAM_dom"/>
</dbReference>
<dbReference type="NCBIfam" id="TIGR01574">
    <property type="entry name" value="miaB-methiolase"/>
    <property type="match status" value="1"/>
</dbReference>
<dbReference type="NCBIfam" id="TIGR00089">
    <property type="entry name" value="MiaB/RimO family radical SAM methylthiotransferase"/>
    <property type="match status" value="1"/>
</dbReference>
<dbReference type="PANTHER" id="PTHR43020">
    <property type="entry name" value="CDK5 REGULATORY SUBUNIT-ASSOCIATED PROTEIN 1"/>
    <property type="match status" value="1"/>
</dbReference>
<dbReference type="PANTHER" id="PTHR43020:SF2">
    <property type="entry name" value="MITOCHONDRIAL TRNA METHYLTHIOTRANSFERASE CDK5RAP1"/>
    <property type="match status" value="1"/>
</dbReference>
<dbReference type="Pfam" id="PF04055">
    <property type="entry name" value="Radical_SAM"/>
    <property type="match status" value="1"/>
</dbReference>
<dbReference type="Pfam" id="PF01938">
    <property type="entry name" value="TRAM"/>
    <property type="match status" value="1"/>
</dbReference>
<dbReference type="Pfam" id="PF00919">
    <property type="entry name" value="UPF0004"/>
    <property type="match status" value="1"/>
</dbReference>
<dbReference type="SFLD" id="SFLDF00273">
    <property type="entry name" value="(dimethylallyl)adenosine_tRNA"/>
    <property type="match status" value="1"/>
</dbReference>
<dbReference type="SFLD" id="SFLDG01082">
    <property type="entry name" value="B12-binding_domain_containing"/>
    <property type="match status" value="1"/>
</dbReference>
<dbReference type="SFLD" id="SFLDG01061">
    <property type="entry name" value="methylthiotransferase"/>
    <property type="match status" value="1"/>
</dbReference>
<dbReference type="SMART" id="SM00729">
    <property type="entry name" value="Elp3"/>
    <property type="match status" value="1"/>
</dbReference>
<dbReference type="SUPFAM" id="SSF102114">
    <property type="entry name" value="Radical SAM enzymes"/>
    <property type="match status" value="1"/>
</dbReference>
<dbReference type="PROSITE" id="PS51449">
    <property type="entry name" value="MTTASE_N"/>
    <property type="match status" value="1"/>
</dbReference>
<dbReference type="PROSITE" id="PS01278">
    <property type="entry name" value="MTTASE_RADICAL"/>
    <property type="match status" value="1"/>
</dbReference>
<dbReference type="PROSITE" id="PS51918">
    <property type="entry name" value="RADICAL_SAM"/>
    <property type="match status" value="1"/>
</dbReference>
<dbReference type="PROSITE" id="PS50926">
    <property type="entry name" value="TRAM"/>
    <property type="match status" value="1"/>
</dbReference>
<name>MIAB_FERNB</name>
<accession>A7HK86</accession>
<sequence length="430" mass="49175">MKVHIFTYGCQMNENDSEIVKQLLKDEGIELTDDENDADVVILNTCAVRKKSEEKVYSHIGKLRKKGKKIGIMGCVAEKEKENLFKRGVSFVIGTRALTKVPDAVLNAKNGNKQIYLEDTLDEIEYHKVETRSSNHHAWVTIIHGCDRFCTYCIVPYTRGREKSRPIDEVLKEVESLSQRGYKEFTFLGQNVDAYGKDLRDGTSLAKLLKLASQIDNVKRLWFLTSYPTDFSLEIPKVMLESEKVARSIHLPVQHGSDKILKAMNRRYTRQEYIDLINEIRKIVPDASISSDIIVGFPGENDEDFEATVELVKLLKFERLNLAVYSPREGTVAWKYLKDDVPYQVKVRRMSYLLNLQKTINKELNKSYLGKEVEVIVEAQAKNGLFYGRDIRNKIISFEANPESIGKNVIVKVNKISAGPLYGEIKKILD</sequence>